<comment type="function">
    <text evidence="2">Involved in the biogenesis of cilia (By similarity). Required for the recruitment of PLK1 to centrosomes and S phase progression (By similarity).</text>
</comment>
<comment type="subunit">
    <text evidence="1">Homooligomer; probably required for localization to centrosomes.</text>
</comment>
<comment type="subcellular location">
    <subcellularLocation>
        <location evidence="1">Cell projection</location>
        <location evidence="1">Cilium</location>
    </subcellularLocation>
    <subcellularLocation>
        <location evidence="1">Cytoplasm</location>
        <location evidence="1">Cytoskeleton</location>
        <location evidence="1">Cilium basal body</location>
    </subcellularLocation>
    <subcellularLocation>
        <location evidence="1">Cytoplasm</location>
        <location evidence="1">Cytoskeleton</location>
        <location evidence="1">Microtubule organizing center</location>
        <location evidence="1">Centrosome</location>
    </subcellularLocation>
    <subcellularLocation>
        <location evidence="1">Cytoplasmic granule</location>
    </subcellularLocation>
    <subcellularLocation>
        <location evidence="1">Cytoplasm</location>
        <location evidence="1">Cytoskeleton</location>
        <location evidence="1">Microtubule organizing center</location>
        <location evidence="1">Centrosome</location>
        <location evidence="1">Centriolar satellite</location>
    </subcellularLocation>
</comment>
<comment type="similarity">
    <text evidence="5">Belongs to the CEP43 family.</text>
</comment>
<proteinExistence type="evidence at transcript level"/>
<dbReference type="EMBL" id="AJ720610">
    <property type="protein sequence ID" value="CAG32269.1"/>
    <property type="molecule type" value="mRNA"/>
</dbReference>
<dbReference type="RefSeq" id="NP_001006170.1">
    <property type="nucleotide sequence ID" value="NM_001006170.1"/>
</dbReference>
<dbReference type="SMR" id="Q5ZJ24"/>
<dbReference type="FunCoup" id="Q5ZJ24">
    <property type="interactions" value="609"/>
</dbReference>
<dbReference type="STRING" id="9031.ENSGALP00000010542"/>
<dbReference type="PaxDb" id="9031-ENSGALP00000010542"/>
<dbReference type="GeneID" id="416598"/>
<dbReference type="KEGG" id="gga:416598"/>
<dbReference type="CTD" id="416598"/>
<dbReference type="VEuPathDB" id="HostDB:geneid_416598"/>
<dbReference type="eggNOG" id="ENOG502S0C1">
    <property type="taxonomic scope" value="Eukaryota"/>
</dbReference>
<dbReference type="InParanoid" id="Q5ZJ24"/>
<dbReference type="OMA" id="EYLVFNR"/>
<dbReference type="OrthoDB" id="5970631at2759"/>
<dbReference type="PhylomeDB" id="Q5ZJ24"/>
<dbReference type="PRO" id="PR:Q5ZJ24"/>
<dbReference type="Proteomes" id="UP000000539">
    <property type="component" value="Unassembled WGS sequence"/>
</dbReference>
<dbReference type="GO" id="GO:0034451">
    <property type="term" value="C:centriolar satellite"/>
    <property type="evidence" value="ECO:0000250"/>
    <property type="project" value="UniProtKB"/>
</dbReference>
<dbReference type="GO" id="GO:0005813">
    <property type="term" value="C:centrosome"/>
    <property type="evidence" value="ECO:0000318"/>
    <property type="project" value="GO_Central"/>
</dbReference>
<dbReference type="GO" id="GO:0036064">
    <property type="term" value="C:ciliary basal body"/>
    <property type="evidence" value="ECO:0000250"/>
    <property type="project" value="UniProtKB"/>
</dbReference>
<dbReference type="GO" id="GO:0005737">
    <property type="term" value="C:cytoplasm"/>
    <property type="evidence" value="ECO:0007669"/>
    <property type="project" value="UniProtKB-KW"/>
</dbReference>
<dbReference type="GO" id="GO:0031514">
    <property type="term" value="C:motile cilium"/>
    <property type="evidence" value="ECO:0000250"/>
    <property type="project" value="UniProtKB"/>
</dbReference>
<dbReference type="GO" id="GO:0060271">
    <property type="term" value="P:cilium assembly"/>
    <property type="evidence" value="ECO:0000250"/>
    <property type="project" value="UniProtKB"/>
</dbReference>
<dbReference type="GO" id="GO:0034453">
    <property type="term" value="P:microtubule anchoring"/>
    <property type="evidence" value="ECO:0007669"/>
    <property type="project" value="InterPro"/>
</dbReference>
<dbReference type="FunFam" id="1.20.960.40:FF:000002">
    <property type="entry name" value="LisH domain-containing protein FOPNL"/>
    <property type="match status" value="1"/>
</dbReference>
<dbReference type="Gene3D" id="1.20.960.40">
    <property type="match status" value="1"/>
</dbReference>
<dbReference type="InterPro" id="IPR018993">
    <property type="entry name" value="FOP_dimerisation-dom_N"/>
</dbReference>
<dbReference type="InterPro" id="IPR006594">
    <property type="entry name" value="LisH"/>
</dbReference>
<dbReference type="PANTHER" id="PTHR15431:SF19">
    <property type="entry name" value="CENTROSOMAL PROTEIN 20-RELATED"/>
    <property type="match status" value="1"/>
</dbReference>
<dbReference type="PANTHER" id="PTHR15431">
    <property type="entry name" value="FGFR1 ONCOGENE PARTNER/LISH DOMAIN-CONTAINING PROTEIN"/>
    <property type="match status" value="1"/>
</dbReference>
<dbReference type="Pfam" id="PF09398">
    <property type="entry name" value="FOP_dimer"/>
    <property type="match status" value="1"/>
</dbReference>
<dbReference type="SMART" id="SM00667">
    <property type="entry name" value="LisH"/>
    <property type="match status" value="1"/>
</dbReference>
<dbReference type="PROSITE" id="PS50896">
    <property type="entry name" value="LISH"/>
    <property type="match status" value="1"/>
</dbReference>
<gene>
    <name type="primary">CEP20</name>
    <name type="synonym">FOPNL</name>
    <name type="ORF">RCJMB04_21j4</name>
</gene>
<feature type="chain" id="PRO_0000264467" description="Centrosomal protein 20">
    <location>
        <begin position="1"/>
        <end position="175"/>
    </location>
</feature>
<feature type="domain" description="LisH" evidence="3">
    <location>
        <begin position="49"/>
        <end position="81"/>
    </location>
</feature>
<feature type="region of interest" description="Necessary and sufficient for homooligomerization and localization to centrosomes and pericentriolar satellites" evidence="1">
    <location>
        <begin position="1"/>
        <end position="104"/>
    </location>
</feature>
<feature type="region of interest" description="Disordered" evidence="4">
    <location>
        <begin position="137"/>
        <end position="166"/>
    </location>
</feature>
<feature type="compositionally biased region" description="Basic and acidic residues" evidence="4">
    <location>
        <begin position="144"/>
        <end position="155"/>
    </location>
</feature>
<keyword id="KW-0966">Cell projection</keyword>
<keyword id="KW-0970">Cilium biogenesis/degradation</keyword>
<keyword id="KW-0963">Cytoplasm</keyword>
<keyword id="KW-0206">Cytoskeleton</keyword>
<keyword id="KW-1185">Reference proteome</keyword>
<sequence>MATIAELKAVLKDTLEKRGALRQIKARIRAEVFNALDDQSEPRPPLCHENLLINELIREYLEFNKYKYSASVLTAEAGQPEVPLDRQFLVKELNIVEDANGKSVPLLYGIISHFLHRGKEESTQSTLPKVSLLSYPRQNLAKPSTERNQKDRIPEPGRMAGTSIEEPLVLQSIKR</sequence>
<accession>Q5ZJ24</accession>
<protein>
    <recommendedName>
        <fullName evidence="5">Centrosomal protein 20</fullName>
    </recommendedName>
    <alternativeName>
        <fullName>FGFR1OP N-terminal-like protein</fullName>
    </alternativeName>
    <alternativeName>
        <fullName>LisH domain-containing protein FOPNL</fullName>
    </alternativeName>
</protein>
<organism>
    <name type="scientific">Gallus gallus</name>
    <name type="common">Chicken</name>
    <dbReference type="NCBI Taxonomy" id="9031"/>
    <lineage>
        <taxon>Eukaryota</taxon>
        <taxon>Metazoa</taxon>
        <taxon>Chordata</taxon>
        <taxon>Craniata</taxon>
        <taxon>Vertebrata</taxon>
        <taxon>Euteleostomi</taxon>
        <taxon>Archelosauria</taxon>
        <taxon>Archosauria</taxon>
        <taxon>Dinosauria</taxon>
        <taxon>Saurischia</taxon>
        <taxon>Theropoda</taxon>
        <taxon>Coelurosauria</taxon>
        <taxon>Aves</taxon>
        <taxon>Neognathae</taxon>
        <taxon>Galloanserae</taxon>
        <taxon>Galliformes</taxon>
        <taxon>Phasianidae</taxon>
        <taxon>Phasianinae</taxon>
        <taxon>Gallus</taxon>
    </lineage>
</organism>
<evidence type="ECO:0000250" key="1"/>
<evidence type="ECO:0000250" key="2">
    <source>
        <dbReference type="UniProtKB" id="Q96NB1"/>
    </source>
</evidence>
<evidence type="ECO:0000255" key="3">
    <source>
        <dbReference type="PROSITE-ProRule" id="PRU00126"/>
    </source>
</evidence>
<evidence type="ECO:0000256" key="4">
    <source>
        <dbReference type="SAM" id="MobiDB-lite"/>
    </source>
</evidence>
<evidence type="ECO:0000305" key="5"/>
<reference key="1">
    <citation type="journal article" date="2005" name="Genome Biol.">
        <title>Full-length cDNAs from chicken bursal lymphocytes to facilitate gene function analysis.</title>
        <authorList>
            <person name="Caldwell R.B."/>
            <person name="Kierzek A.M."/>
            <person name="Arakawa H."/>
            <person name="Bezzubov Y."/>
            <person name="Zaim J."/>
            <person name="Fiedler P."/>
            <person name="Kutter S."/>
            <person name="Blagodatski A."/>
            <person name="Kostovska D."/>
            <person name="Koter M."/>
            <person name="Plachy J."/>
            <person name="Carninci P."/>
            <person name="Hayashizaki Y."/>
            <person name="Buerstedde J.-M."/>
        </authorList>
    </citation>
    <scope>NUCLEOTIDE SEQUENCE [LARGE SCALE MRNA]</scope>
    <source>
        <strain>CB</strain>
        <tissue>Bursa of Fabricius</tissue>
    </source>
</reference>
<name>CEP20_CHICK</name>